<dbReference type="EC" id="2.5.1.3" evidence="1"/>
<dbReference type="EMBL" id="FM200053">
    <property type="protein sequence ID" value="CAR61998.1"/>
    <property type="molecule type" value="Genomic_DNA"/>
</dbReference>
<dbReference type="RefSeq" id="WP_000284646.1">
    <property type="nucleotide sequence ID" value="NC_011147.1"/>
</dbReference>
<dbReference type="SMR" id="B5BJR2"/>
<dbReference type="KEGG" id="sek:SSPA3715"/>
<dbReference type="HOGENOM" id="CLU_018272_3_3_6"/>
<dbReference type="UniPathway" id="UPA00060">
    <property type="reaction ID" value="UER00141"/>
</dbReference>
<dbReference type="Proteomes" id="UP000001869">
    <property type="component" value="Chromosome"/>
</dbReference>
<dbReference type="GO" id="GO:0005737">
    <property type="term" value="C:cytoplasm"/>
    <property type="evidence" value="ECO:0007669"/>
    <property type="project" value="TreeGrafter"/>
</dbReference>
<dbReference type="GO" id="GO:0000287">
    <property type="term" value="F:magnesium ion binding"/>
    <property type="evidence" value="ECO:0007669"/>
    <property type="project" value="UniProtKB-UniRule"/>
</dbReference>
<dbReference type="GO" id="GO:0004789">
    <property type="term" value="F:thiamine-phosphate diphosphorylase activity"/>
    <property type="evidence" value="ECO:0007669"/>
    <property type="project" value="UniProtKB-UniRule"/>
</dbReference>
<dbReference type="GO" id="GO:0009228">
    <property type="term" value="P:thiamine biosynthetic process"/>
    <property type="evidence" value="ECO:0007669"/>
    <property type="project" value="UniProtKB-KW"/>
</dbReference>
<dbReference type="GO" id="GO:0009229">
    <property type="term" value="P:thiamine diphosphate biosynthetic process"/>
    <property type="evidence" value="ECO:0007669"/>
    <property type="project" value="UniProtKB-UniRule"/>
</dbReference>
<dbReference type="CDD" id="cd00564">
    <property type="entry name" value="TMP_TenI"/>
    <property type="match status" value="1"/>
</dbReference>
<dbReference type="FunFam" id="3.20.20.70:FF:000064">
    <property type="entry name" value="Thiamine-phosphate synthase"/>
    <property type="match status" value="1"/>
</dbReference>
<dbReference type="Gene3D" id="3.20.20.70">
    <property type="entry name" value="Aldolase class I"/>
    <property type="match status" value="1"/>
</dbReference>
<dbReference type="HAMAP" id="MF_00097">
    <property type="entry name" value="TMP_synthase"/>
    <property type="match status" value="1"/>
</dbReference>
<dbReference type="InterPro" id="IPR013785">
    <property type="entry name" value="Aldolase_TIM"/>
</dbReference>
<dbReference type="InterPro" id="IPR036206">
    <property type="entry name" value="ThiamineP_synth_sf"/>
</dbReference>
<dbReference type="InterPro" id="IPR022998">
    <property type="entry name" value="ThiamineP_synth_TenI"/>
</dbReference>
<dbReference type="InterPro" id="IPR034291">
    <property type="entry name" value="TMP_synthase"/>
</dbReference>
<dbReference type="NCBIfam" id="NF002904">
    <property type="entry name" value="PRK03512.1"/>
    <property type="match status" value="1"/>
</dbReference>
<dbReference type="NCBIfam" id="TIGR00693">
    <property type="entry name" value="thiE"/>
    <property type="match status" value="1"/>
</dbReference>
<dbReference type="PANTHER" id="PTHR20857">
    <property type="entry name" value="THIAMINE-PHOSPHATE PYROPHOSPHORYLASE"/>
    <property type="match status" value="1"/>
</dbReference>
<dbReference type="PANTHER" id="PTHR20857:SF15">
    <property type="entry name" value="THIAMINE-PHOSPHATE SYNTHASE"/>
    <property type="match status" value="1"/>
</dbReference>
<dbReference type="Pfam" id="PF02581">
    <property type="entry name" value="TMP-TENI"/>
    <property type="match status" value="1"/>
</dbReference>
<dbReference type="SUPFAM" id="SSF51391">
    <property type="entry name" value="Thiamin phosphate synthase"/>
    <property type="match status" value="1"/>
</dbReference>
<evidence type="ECO:0000255" key="1">
    <source>
        <dbReference type="HAMAP-Rule" id="MF_00097"/>
    </source>
</evidence>
<proteinExistence type="inferred from homology"/>
<reference key="1">
    <citation type="journal article" date="2009" name="BMC Genomics">
        <title>Pseudogene accumulation in the evolutionary histories of Salmonella enterica serovars Paratyphi A and Typhi.</title>
        <authorList>
            <person name="Holt K.E."/>
            <person name="Thomson N.R."/>
            <person name="Wain J."/>
            <person name="Langridge G.C."/>
            <person name="Hasan R."/>
            <person name="Bhutta Z.A."/>
            <person name="Quail M.A."/>
            <person name="Norbertczak H."/>
            <person name="Walker D."/>
            <person name="Simmonds M."/>
            <person name="White B."/>
            <person name="Bason N."/>
            <person name="Mungall K."/>
            <person name="Dougan G."/>
            <person name="Parkhill J."/>
        </authorList>
    </citation>
    <scope>NUCLEOTIDE SEQUENCE [LARGE SCALE GENOMIC DNA]</scope>
    <source>
        <strain>AKU_12601</strain>
    </source>
</reference>
<accession>B5BJR2</accession>
<sequence>MYQPDFPTVPFRLGLYPVVDSVEWIERLLEAGVRTIQLRIKDKRDEEVEADVIAAIALGRRYDARLFINDYWRLAMKHNAYGVHLGQEDLETTDLKAIQAAGLRLGVSTHDDMEIDIALAAKPSYIALGHVFPTQTKQMPSAPQGLAQLVRHIERLADYPTVAIGGISLEHAPAVLATGVGSIAVVSAITQAADWRDATAQLLAIAGVGDE</sequence>
<comment type="function">
    <text evidence="1">Condenses 4-methyl-5-(beta-hydroxyethyl)thiazole monophosphate (THZ-P) and 2-methyl-4-amino-5-hydroxymethyl pyrimidine pyrophosphate (HMP-PP) to form thiamine monophosphate (TMP).</text>
</comment>
<comment type="catalytic activity">
    <reaction evidence="1">
        <text>2-[(2R,5Z)-2-carboxy-4-methylthiazol-5(2H)-ylidene]ethyl phosphate + 4-amino-2-methyl-5-(diphosphooxymethyl)pyrimidine + 2 H(+) = thiamine phosphate + CO2 + diphosphate</text>
        <dbReference type="Rhea" id="RHEA:47844"/>
        <dbReference type="ChEBI" id="CHEBI:15378"/>
        <dbReference type="ChEBI" id="CHEBI:16526"/>
        <dbReference type="ChEBI" id="CHEBI:33019"/>
        <dbReference type="ChEBI" id="CHEBI:37575"/>
        <dbReference type="ChEBI" id="CHEBI:57841"/>
        <dbReference type="ChEBI" id="CHEBI:62899"/>
        <dbReference type="EC" id="2.5.1.3"/>
    </reaction>
</comment>
<comment type="catalytic activity">
    <reaction evidence="1">
        <text>2-(2-carboxy-4-methylthiazol-5-yl)ethyl phosphate + 4-amino-2-methyl-5-(diphosphooxymethyl)pyrimidine + 2 H(+) = thiamine phosphate + CO2 + diphosphate</text>
        <dbReference type="Rhea" id="RHEA:47848"/>
        <dbReference type="ChEBI" id="CHEBI:15378"/>
        <dbReference type="ChEBI" id="CHEBI:16526"/>
        <dbReference type="ChEBI" id="CHEBI:33019"/>
        <dbReference type="ChEBI" id="CHEBI:37575"/>
        <dbReference type="ChEBI" id="CHEBI:57841"/>
        <dbReference type="ChEBI" id="CHEBI:62890"/>
        <dbReference type="EC" id="2.5.1.3"/>
    </reaction>
</comment>
<comment type="catalytic activity">
    <reaction evidence="1">
        <text>4-methyl-5-(2-phosphooxyethyl)-thiazole + 4-amino-2-methyl-5-(diphosphooxymethyl)pyrimidine + H(+) = thiamine phosphate + diphosphate</text>
        <dbReference type="Rhea" id="RHEA:22328"/>
        <dbReference type="ChEBI" id="CHEBI:15378"/>
        <dbReference type="ChEBI" id="CHEBI:33019"/>
        <dbReference type="ChEBI" id="CHEBI:37575"/>
        <dbReference type="ChEBI" id="CHEBI:57841"/>
        <dbReference type="ChEBI" id="CHEBI:58296"/>
        <dbReference type="EC" id="2.5.1.3"/>
    </reaction>
</comment>
<comment type="cofactor">
    <cofactor evidence="1">
        <name>Mg(2+)</name>
        <dbReference type="ChEBI" id="CHEBI:18420"/>
    </cofactor>
    <text evidence="1">Binds 1 Mg(2+) ion per subunit.</text>
</comment>
<comment type="pathway">
    <text evidence="1">Cofactor biosynthesis; thiamine diphosphate biosynthesis; thiamine phosphate from 4-amino-2-methyl-5-diphosphomethylpyrimidine and 4-methyl-5-(2-phosphoethyl)-thiazole: step 1/1.</text>
</comment>
<comment type="similarity">
    <text evidence="1">Belongs to the thiamine-phosphate synthase family.</text>
</comment>
<feature type="chain" id="PRO_1000093689" description="Thiamine-phosphate synthase">
    <location>
        <begin position="1"/>
        <end position="211"/>
    </location>
</feature>
<feature type="binding site" evidence="1">
    <location>
        <begin position="37"/>
        <end position="41"/>
    </location>
    <ligand>
        <name>4-amino-2-methyl-5-(diphosphooxymethyl)pyrimidine</name>
        <dbReference type="ChEBI" id="CHEBI:57841"/>
    </ligand>
</feature>
<feature type="binding site" evidence="1">
    <location>
        <position position="69"/>
    </location>
    <ligand>
        <name>4-amino-2-methyl-5-(diphosphooxymethyl)pyrimidine</name>
        <dbReference type="ChEBI" id="CHEBI:57841"/>
    </ligand>
</feature>
<feature type="binding site" evidence="1">
    <location>
        <position position="70"/>
    </location>
    <ligand>
        <name>Mg(2+)</name>
        <dbReference type="ChEBI" id="CHEBI:18420"/>
    </ligand>
</feature>
<feature type="binding site" evidence="1">
    <location>
        <position position="89"/>
    </location>
    <ligand>
        <name>Mg(2+)</name>
        <dbReference type="ChEBI" id="CHEBI:18420"/>
    </ligand>
</feature>
<feature type="binding site" evidence="1">
    <location>
        <position position="108"/>
    </location>
    <ligand>
        <name>4-amino-2-methyl-5-(diphosphooxymethyl)pyrimidine</name>
        <dbReference type="ChEBI" id="CHEBI:57841"/>
    </ligand>
</feature>
<feature type="binding site" evidence="1">
    <location>
        <begin position="134"/>
        <end position="136"/>
    </location>
    <ligand>
        <name>2-[(2R,5Z)-2-carboxy-4-methylthiazol-5(2H)-ylidene]ethyl phosphate</name>
        <dbReference type="ChEBI" id="CHEBI:62899"/>
    </ligand>
</feature>
<feature type="binding site" evidence="1">
    <location>
        <position position="137"/>
    </location>
    <ligand>
        <name>4-amino-2-methyl-5-(diphosphooxymethyl)pyrimidine</name>
        <dbReference type="ChEBI" id="CHEBI:57841"/>
    </ligand>
</feature>
<feature type="binding site" evidence="1">
    <location>
        <position position="166"/>
    </location>
    <ligand>
        <name>2-[(2R,5Z)-2-carboxy-4-methylthiazol-5(2H)-ylidene]ethyl phosphate</name>
        <dbReference type="ChEBI" id="CHEBI:62899"/>
    </ligand>
</feature>
<feature type="binding site" evidence="1">
    <location>
        <begin position="186"/>
        <end position="187"/>
    </location>
    <ligand>
        <name>2-[(2R,5Z)-2-carboxy-4-methylthiazol-5(2H)-ylidene]ethyl phosphate</name>
        <dbReference type="ChEBI" id="CHEBI:62899"/>
    </ligand>
</feature>
<keyword id="KW-0460">Magnesium</keyword>
<keyword id="KW-0479">Metal-binding</keyword>
<keyword id="KW-0784">Thiamine biosynthesis</keyword>
<keyword id="KW-0808">Transferase</keyword>
<protein>
    <recommendedName>
        <fullName evidence="1">Thiamine-phosphate synthase</fullName>
        <shortName evidence="1">TP synthase</shortName>
        <shortName evidence="1">TPS</shortName>
        <ecNumber evidence="1">2.5.1.3</ecNumber>
    </recommendedName>
    <alternativeName>
        <fullName evidence="1">Thiamine-phosphate pyrophosphorylase</fullName>
        <shortName evidence="1">TMP pyrophosphorylase</shortName>
        <shortName evidence="1">TMP-PPase</shortName>
    </alternativeName>
</protein>
<name>THIE_SALPK</name>
<gene>
    <name evidence="1" type="primary">thiE</name>
    <name type="ordered locus">SSPA3715</name>
</gene>
<organism>
    <name type="scientific">Salmonella paratyphi A (strain AKU_12601)</name>
    <dbReference type="NCBI Taxonomy" id="554290"/>
    <lineage>
        <taxon>Bacteria</taxon>
        <taxon>Pseudomonadati</taxon>
        <taxon>Pseudomonadota</taxon>
        <taxon>Gammaproteobacteria</taxon>
        <taxon>Enterobacterales</taxon>
        <taxon>Enterobacteriaceae</taxon>
        <taxon>Salmonella</taxon>
    </lineage>
</organism>